<proteinExistence type="predicted"/>
<protein>
    <recommendedName>
        <fullName>Uncharacterized protein MJ0675</fullName>
    </recommendedName>
</protein>
<accession>Q58088</accession>
<keyword id="KW-1185">Reference proteome</keyword>
<dbReference type="EMBL" id="L77117">
    <property type="protein sequence ID" value="AAB98669.1"/>
    <property type="molecule type" value="Genomic_DNA"/>
</dbReference>
<dbReference type="PIR" id="C64384">
    <property type="entry name" value="C64384"/>
</dbReference>
<dbReference type="RefSeq" id="WP_010870180.1">
    <property type="nucleotide sequence ID" value="NC_000909.1"/>
</dbReference>
<dbReference type="SMR" id="Q58088"/>
<dbReference type="STRING" id="243232.MJ_0675"/>
<dbReference type="PaxDb" id="243232-MJ_0675"/>
<dbReference type="EnsemblBacteria" id="AAB98669">
    <property type="protein sequence ID" value="AAB98669"/>
    <property type="gene ID" value="MJ_0675"/>
</dbReference>
<dbReference type="GeneID" id="1451541"/>
<dbReference type="KEGG" id="mja:MJ_0675"/>
<dbReference type="eggNOG" id="arCOG00913">
    <property type="taxonomic scope" value="Archaea"/>
</dbReference>
<dbReference type="HOGENOM" id="CLU_042160_0_0_2"/>
<dbReference type="InParanoid" id="Q58088"/>
<dbReference type="OrthoDB" id="358909at2157"/>
<dbReference type="PhylomeDB" id="Q58088"/>
<dbReference type="Proteomes" id="UP000000805">
    <property type="component" value="Chromosome"/>
</dbReference>
<dbReference type="GO" id="GO:0016740">
    <property type="term" value="F:transferase activity"/>
    <property type="evidence" value="ECO:0000318"/>
    <property type="project" value="GO_Central"/>
</dbReference>
<dbReference type="GO" id="GO:0016765">
    <property type="term" value="F:transferase activity, transferring alkyl or aryl (other than methyl) groups"/>
    <property type="evidence" value="ECO:0007669"/>
    <property type="project" value="InterPro"/>
</dbReference>
<dbReference type="GO" id="GO:0006596">
    <property type="term" value="P:polyamine biosynthetic process"/>
    <property type="evidence" value="ECO:0000318"/>
    <property type="project" value="GO_Central"/>
</dbReference>
<dbReference type="CDD" id="cd02440">
    <property type="entry name" value="AdoMet_MTases"/>
    <property type="match status" value="1"/>
</dbReference>
<dbReference type="Gene3D" id="3.40.50.150">
    <property type="entry name" value="Vaccinia Virus protein VP39"/>
    <property type="match status" value="1"/>
</dbReference>
<dbReference type="Gene3D" id="1.10.10.10">
    <property type="entry name" value="Winged helix-like DNA-binding domain superfamily/Winged helix DNA-binding domain"/>
    <property type="match status" value="1"/>
</dbReference>
<dbReference type="InterPro" id="IPR014435">
    <property type="entry name" value="BpsA"/>
</dbReference>
<dbReference type="InterPro" id="IPR002723">
    <property type="entry name" value="BpsA_C"/>
</dbReference>
<dbReference type="InterPro" id="IPR051720">
    <property type="entry name" value="rRNA_MeTrfase/Polyamine_Synth"/>
</dbReference>
<dbReference type="InterPro" id="IPR029063">
    <property type="entry name" value="SAM-dependent_MTases_sf"/>
</dbReference>
<dbReference type="InterPro" id="IPR036388">
    <property type="entry name" value="WH-like_DNA-bd_sf"/>
</dbReference>
<dbReference type="InterPro" id="IPR036390">
    <property type="entry name" value="WH_DNA-bd_sf"/>
</dbReference>
<dbReference type="PANTHER" id="PTHR23290">
    <property type="entry name" value="RRNA N6-ADENOSINE-METHYLTRANSFERASE METTL5"/>
    <property type="match status" value="1"/>
</dbReference>
<dbReference type="PANTHER" id="PTHR23290:SF0">
    <property type="entry name" value="RRNA N6-ADENOSINE-METHYLTRANSFERASE METTL5"/>
    <property type="match status" value="1"/>
</dbReference>
<dbReference type="Pfam" id="PF01861">
    <property type="entry name" value="BpsA_C"/>
    <property type="match status" value="1"/>
</dbReference>
<dbReference type="PIRSF" id="PIRSF005895">
    <property type="entry name" value="UCP005895_mtase"/>
    <property type="match status" value="1"/>
</dbReference>
<dbReference type="SUPFAM" id="SSF53335">
    <property type="entry name" value="S-adenosyl-L-methionine-dependent methyltransferases"/>
    <property type="match status" value="1"/>
</dbReference>
<dbReference type="SUPFAM" id="SSF46785">
    <property type="entry name" value="Winged helix' DNA-binding domain"/>
    <property type="match status" value="1"/>
</dbReference>
<gene>
    <name type="ordered locus">MJ0675</name>
</gene>
<sequence>MKIIGKIGKGKVEVNEKTKFSILLNNVAKKADIAEGKRAVEDIIRVIYRHQPISTKKIAQKTRLPLPIVAKVRTILEREKILKRTERGAELTDLGKEFAENFLKLKYKKSLTCKTCNGRGIVLDEFFEDILNKVRVWAKRRPLVDTTIDQSFATPETSTYRAALMYERGDLEGKRILFVGDDDLTSLPTALTNMAEEIAVVDIDERILKLIEKFSQKEGVKIKTIKHDLRNPLPQDLKERFDVISTDPPYTVDGLKLFLSRGIEALGKEGIAYLSYSHKPIDEWLSIQKAITNMGFVISELIPNFNYYEGSEIIANTTFIARLVGKNLKINIGDTEKIYTGLVKPVIRYYKCLKCGKIHKVGEEVKKVEDLVCECGGKKFKMIKREKLKNE</sequence>
<organism>
    <name type="scientific">Methanocaldococcus jannaschii (strain ATCC 43067 / DSM 2661 / JAL-1 / JCM 10045 / NBRC 100440)</name>
    <name type="common">Methanococcus jannaschii</name>
    <dbReference type="NCBI Taxonomy" id="243232"/>
    <lineage>
        <taxon>Archaea</taxon>
        <taxon>Methanobacteriati</taxon>
        <taxon>Methanobacteriota</taxon>
        <taxon>Methanomada group</taxon>
        <taxon>Methanococci</taxon>
        <taxon>Methanococcales</taxon>
        <taxon>Methanocaldococcaceae</taxon>
        <taxon>Methanocaldococcus</taxon>
    </lineage>
</organism>
<reference key="1">
    <citation type="journal article" date="1996" name="Science">
        <title>Complete genome sequence of the methanogenic archaeon, Methanococcus jannaschii.</title>
        <authorList>
            <person name="Bult C.J."/>
            <person name="White O."/>
            <person name="Olsen G.J."/>
            <person name="Zhou L."/>
            <person name="Fleischmann R.D."/>
            <person name="Sutton G.G."/>
            <person name="Blake J.A."/>
            <person name="FitzGerald L.M."/>
            <person name="Clayton R.A."/>
            <person name="Gocayne J.D."/>
            <person name="Kerlavage A.R."/>
            <person name="Dougherty B.A."/>
            <person name="Tomb J.-F."/>
            <person name="Adams M.D."/>
            <person name="Reich C.I."/>
            <person name="Overbeek R."/>
            <person name="Kirkness E.F."/>
            <person name="Weinstock K.G."/>
            <person name="Merrick J.M."/>
            <person name="Glodek A."/>
            <person name="Scott J.L."/>
            <person name="Geoghagen N.S.M."/>
            <person name="Weidman J.F."/>
            <person name="Fuhrmann J.L."/>
            <person name="Nguyen D."/>
            <person name="Utterback T.R."/>
            <person name="Kelley J.M."/>
            <person name="Peterson J.D."/>
            <person name="Sadow P.W."/>
            <person name="Hanna M.C."/>
            <person name="Cotton M.D."/>
            <person name="Roberts K.M."/>
            <person name="Hurst M.A."/>
            <person name="Kaine B.P."/>
            <person name="Borodovsky M."/>
            <person name="Klenk H.-P."/>
            <person name="Fraser C.M."/>
            <person name="Smith H.O."/>
            <person name="Woese C.R."/>
            <person name="Venter J.C."/>
        </authorList>
    </citation>
    <scope>NUCLEOTIDE SEQUENCE [LARGE SCALE GENOMIC DNA]</scope>
    <source>
        <strain>ATCC 43067 / DSM 2661 / JAL-1 / JCM 10045 / NBRC 100440</strain>
    </source>
</reference>
<feature type="chain" id="PRO_0000106985" description="Uncharacterized protein MJ0675">
    <location>
        <begin position="1"/>
        <end position="391"/>
    </location>
</feature>
<name>Y675_METJA</name>